<feature type="chain" id="PRO_1000098152" description="Serine--tRNA ligase">
    <location>
        <begin position="1"/>
        <end position="430"/>
    </location>
</feature>
<feature type="binding site" evidence="1">
    <location>
        <begin position="237"/>
        <end position="239"/>
    </location>
    <ligand>
        <name>L-serine</name>
        <dbReference type="ChEBI" id="CHEBI:33384"/>
    </ligand>
</feature>
<feature type="binding site" evidence="1">
    <location>
        <begin position="268"/>
        <end position="270"/>
    </location>
    <ligand>
        <name>ATP</name>
        <dbReference type="ChEBI" id="CHEBI:30616"/>
    </ligand>
</feature>
<feature type="binding site" evidence="1">
    <location>
        <position position="291"/>
    </location>
    <ligand>
        <name>L-serine</name>
        <dbReference type="ChEBI" id="CHEBI:33384"/>
    </ligand>
</feature>
<feature type="binding site" evidence="1">
    <location>
        <begin position="355"/>
        <end position="358"/>
    </location>
    <ligand>
        <name>ATP</name>
        <dbReference type="ChEBI" id="CHEBI:30616"/>
    </ligand>
</feature>
<feature type="binding site" evidence="1">
    <location>
        <position position="391"/>
    </location>
    <ligand>
        <name>L-serine</name>
        <dbReference type="ChEBI" id="CHEBI:33384"/>
    </ligand>
</feature>
<name>SYS_YERPY</name>
<comment type="function">
    <text evidence="1">Catalyzes the attachment of serine to tRNA(Ser). Is also able to aminoacylate tRNA(Sec) with serine, to form the misacylated tRNA L-seryl-tRNA(Sec), which will be further converted into selenocysteinyl-tRNA(Sec).</text>
</comment>
<comment type="catalytic activity">
    <reaction evidence="1">
        <text>tRNA(Ser) + L-serine + ATP = L-seryl-tRNA(Ser) + AMP + diphosphate + H(+)</text>
        <dbReference type="Rhea" id="RHEA:12292"/>
        <dbReference type="Rhea" id="RHEA-COMP:9669"/>
        <dbReference type="Rhea" id="RHEA-COMP:9703"/>
        <dbReference type="ChEBI" id="CHEBI:15378"/>
        <dbReference type="ChEBI" id="CHEBI:30616"/>
        <dbReference type="ChEBI" id="CHEBI:33019"/>
        <dbReference type="ChEBI" id="CHEBI:33384"/>
        <dbReference type="ChEBI" id="CHEBI:78442"/>
        <dbReference type="ChEBI" id="CHEBI:78533"/>
        <dbReference type="ChEBI" id="CHEBI:456215"/>
        <dbReference type="EC" id="6.1.1.11"/>
    </reaction>
</comment>
<comment type="catalytic activity">
    <reaction evidence="1">
        <text>tRNA(Sec) + L-serine + ATP = L-seryl-tRNA(Sec) + AMP + diphosphate + H(+)</text>
        <dbReference type="Rhea" id="RHEA:42580"/>
        <dbReference type="Rhea" id="RHEA-COMP:9742"/>
        <dbReference type="Rhea" id="RHEA-COMP:10128"/>
        <dbReference type="ChEBI" id="CHEBI:15378"/>
        <dbReference type="ChEBI" id="CHEBI:30616"/>
        <dbReference type="ChEBI" id="CHEBI:33019"/>
        <dbReference type="ChEBI" id="CHEBI:33384"/>
        <dbReference type="ChEBI" id="CHEBI:78442"/>
        <dbReference type="ChEBI" id="CHEBI:78533"/>
        <dbReference type="ChEBI" id="CHEBI:456215"/>
        <dbReference type="EC" id="6.1.1.11"/>
    </reaction>
</comment>
<comment type="pathway">
    <text evidence="1">Aminoacyl-tRNA biosynthesis; selenocysteinyl-tRNA(Sec) biosynthesis; L-seryl-tRNA(Sec) from L-serine and tRNA(Sec): step 1/1.</text>
</comment>
<comment type="subunit">
    <text evidence="1">Homodimer. The tRNA molecule binds across the dimer.</text>
</comment>
<comment type="subcellular location">
    <subcellularLocation>
        <location evidence="1">Cytoplasm</location>
    </subcellularLocation>
</comment>
<comment type="domain">
    <text evidence="1">Consists of two distinct domains, a catalytic core and a N-terminal extension that is involved in tRNA binding.</text>
</comment>
<comment type="similarity">
    <text evidence="1">Belongs to the class-II aminoacyl-tRNA synthetase family. Type-1 seryl-tRNA synthetase subfamily.</text>
</comment>
<evidence type="ECO:0000255" key="1">
    <source>
        <dbReference type="HAMAP-Rule" id="MF_00176"/>
    </source>
</evidence>
<organism>
    <name type="scientific">Yersinia pseudotuberculosis serotype O:3 (strain YPIII)</name>
    <dbReference type="NCBI Taxonomy" id="502800"/>
    <lineage>
        <taxon>Bacteria</taxon>
        <taxon>Pseudomonadati</taxon>
        <taxon>Pseudomonadota</taxon>
        <taxon>Gammaproteobacteria</taxon>
        <taxon>Enterobacterales</taxon>
        <taxon>Yersiniaceae</taxon>
        <taxon>Yersinia</taxon>
    </lineage>
</organism>
<reference key="1">
    <citation type="submission" date="2008-02" db="EMBL/GenBank/DDBJ databases">
        <title>Complete sequence of Yersinia pseudotuberculosis YPIII.</title>
        <authorList>
            <consortium name="US DOE Joint Genome Institute"/>
            <person name="Copeland A."/>
            <person name="Lucas S."/>
            <person name="Lapidus A."/>
            <person name="Glavina del Rio T."/>
            <person name="Dalin E."/>
            <person name="Tice H."/>
            <person name="Bruce D."/>
            <person name="Goodwin L."/>
            <person name="Pitluck S."/>
            <person name="Munk A.C."/>
            <person name="Brettin T."/>
            <person name="Detter J.C."/>
            <person name="Han C."/>
            <person name="Tapia R."/>
            <person name="Schmutz J."/>
            <person name="Larimer F."/>
            <person name="Land M."/>
            <person name="Hauser L."/>
            <person name="Challacombe J.F."/>
            <person name="Green L."/>
            <person name="Lindler L.E."/>
            <person name="Nikolich M.P."/>
            <person name="Richardson P."/>
        </authorList>
    </citation>
    <scope>NUCLEOTIDE SEQUENCE [LARGE SCALE GENOMIC DNA]</scope>
    <source>
        <strain>YPIII</strain>
    </source>
</reference>
<protein>
    <recommendedName>
        <fullName evidence="1">Serine--tRNA ligase</fullName>
        <ecNumber evidence="1">6.1.1.11</ecNumber>
    </recommendedName>
    <alternativeName>
        <fullName evidence="1">Seryl-tRNA synthetase</fullName>
        <shortName evidence="1">SerRS</shortName>
    </alternativeName>
    <alternativeName>
        <fullName evidence="1">Seryl-tRNA(Ser/Sec) synthetase</fullName>
    </alternativeName>
</protein>
<accession>B1JRF0</accession>
<sequence>MLDPNMLRNELDAVAEKLARRGFKLDVEVLRQQEERRKVLQVETESLQAERNSRSKQIGAAKARGEDIEPLRLEVNALGEKLDAAKAELDKLQNEIRDLALSIPNLPDDSVPVGKNENDNIEVSRWGEPRKYDFDVKDHVSLGEMAGGLDFAAAVKLTGARFVVMKGQIARMHRALSQFMLDLHTEKHGYLEAYVPYLVNHATLYGTGQLPKFGEDLFHTKPLAEESDNSNYALIPTAEVPLTNLVRDEILEEDSLPLKLTAHTPCFRSEAGSYGRDTRGLIRMHQFDKVEMVQITRPEDSMAALEELTGHAEKVLQLLELPYRKVLLCTGDMGFGSSKTYDLEVWLPAQDTYREISSCSNMWDFQARRMQARYRNKTDRKTRLVHTLNGSGLAVGRTLVAVLENYQQADGRIQVPDVLRPYMGGLEYIG</sequence>
<proteinExistence type="inferred from homology"/>
<keyword id="KW-0030">Aminoacyl-tRNA synthetase</keyword>
<keyword id="KW-0067">ATP-binding</keyword>
<keyword id="KW-0963">Cytoplasm</keyword>
<keyword id="KW-0436">Ligase</keyword>
<keyword id="KW-0547">Nucleotide-binding</keyword>
<keyword id="KW-0648">Protein biosynthesis</keyword>
<gene>
    <name evidence="1" type="primary">serS</name>
    <name type="ordered locus">YPK_2681</name>
</gene>
<dbReference type="EC" id="6.1.1.11" evidence="1"/>
<dbReference type="EMBL" id="CP000950">
    <property type="protein sequence ID" value="ACA68958.1"/>
    <property type="molecule type" value="Genomic_DNA"/>
</dbReference>
<dbReference type="RefSeq" id="WP_002211336.1">
    <property type="nucleotide sequence ID" value="NZ_CP009792.1"/>
</dbReference>
<dbReference type="SMR" id="B1JRF0"/>
<dbReference type="GeneID" id="57977175"/>
<dbReference type="KEGG" id="ypy:YPK_2681"/>
<dbReference type="PATRIC" id="fig|502800.11.peg.3381"/>
<dbReference type="UniPathway" id="UPA00906">
    <property type="reaction ID" value="UER00895"/>
</dbReference>
<dbReference type="GO" id="GO:0005737">
    <property type="term" value="C:cytoplasm"/>
    <property type="evidence" value="ECO:0007669"/>
    <property type="project" value="UniProtKB-SubCell"/>
</dbReference>
<dbReference type="GO" id="GO:0005524">
    <property type="term" value="F:ATP binding"/>
    <property type="evidence" value="ECO:0007669"/>
    <property type="project" value="UniProtKB-UniRule"/>
</dbReference>
<dbReference type="GO" id="GO:0004828">
    <property type="term" value="F:serine-tRNA ligase activity"/>
    <property type="evidence" value="ECO:0007669"/>
    <property type="project" value="UniProtKB-UniRule"/>
</dbReference>
<dbReference type="GO" id="GO:0016260">
    <property type="term" value="P:selenocysteine biosynthetic process"/>
    <property type="evidence" value="ECO:0007669"/>
    <property type="project" value="UniProtKB-UniRule"/>
</dbReference>
<dbReference type="GO" id="GO:0006434">
    <property type="term" value="P:seryl-tRNA aminoacylation"/>
    <property type="evidence" value="ECO:0007669"/>
    <property type="project" value="UniProtKB-UniRule"/>
</dbReference>
<dbReference type="CDD" id="cd00770">
    <property type="entry name" value="SerRS_core"/>
    <property type="match status" value="1"/>
</dbReference>
<dbReference type="FunFam" id="1.10.287.40:FF:000001">
    <property type="entry name" value="Serine--tRNA ligase"/>
    <property type="match status" value="1"/>
</dbReference>
<dbReference type="FunFam" id="3.30.930.10:FF:000018">
    <property type="entry name" value="Serine--tRNA ligase"/>
    <property type="match status" value="1"/>
</dbReference>
<dbReference type="Gene3D" id="3.30.930.10">
    <property type="entry name" value="Bira Bifunctional Protein, Domain 2"/>
    <property type="match status" value="1"/>
</dbReference>
<dbReference type="Gene3D" id="1.10.287.40">
    <property type="entry name" value="Serine-tRNA synthetase, tRNA binding domain"/>
    <property type="match status" value="1"/>
</dbReference>
<dbReference type="HAMAP" id="MF_00176">
    <property type="entry name" value="Ser_tRNA_synth_type1"/>
    <property type="match status" value="1"/>
</dbReference>
<dbReference type="InterPro" id="IPR002314">
    <property type="entry name" value="aa-tRNA-synt_IIb"/>
</dbReference>
<dbReference type="InterPro" id="IPR006195">
    <property type="entry name" value="aa-tRNA-synth_II"/>
</dbReference>
<dbReference type="InterPro" id="IPR045864">
    <property type="entry name" value="aa-tRNA-synth_II/BPL/LPL"/>
</dbReference>
<dbReference type="InterPro" id="IPR002317">
    <property type="entry name" value="Ser-tRNA-ligase_type_1"/>
</dbReference>
<dbReference type="InterPro" id="IPR015866">
    <property type="entry name" value="Ser-tRNA-synth_1_N"/>
</dbReference>
<dbReference type="InterPro" id="IPR042103">
    <property type="entry name" value="SerRS_1_N_sf"/>
</dbReference>
<dbReference type="InterPro" id="IPR033729">
    <property type="entry name" value="SerRS_core"/>
</dbReference>
<dbReference type="InterPro" id="IPR010978">
    <property type="entry name" value="tRNA-bd_arm"/>
</dbReference>
<dbReference type="NCBIfam" id="TIGR00414">
    <property type="entry name" value="serS"/>
    <property type="match status" value="1"/>
</dbReference>
<dbReference type="PANTHER" id="PTHR43697:SF1">
    <property type="entry name" value="SERINE--TRNA LIGASE"/>
    <property type="match status" value="1"/>
</dbReference>
<dbReference type="PANTHER" id="PTHR43697">
    <property type="entry name" value="SERYL-TRNA SYNTHETASE"/>
    <property type="match status" value="1"/>
</dbReference>
<dbReference type="Pfam" id="PF02403">
    <property type="entry name" value="Seryl_tRNA_N"/>
    <property type="match status" value="1"/>
</dbReference>
<dbReference type="Pfam" id="PF00587">
    <property type="entry name" value="tRNA-synt_2b"/>
    <property type="match status" value="1"/>
</dbReference>
<dbReference type="PIRSF" id="PIRSF001529">
    <property type="entry name" value="Ser-tRNA-synth_IIa"/>
    <property type="match status" value="1"/>
</dbReference>
<dbReference type="PRINTS" id="PR00981">
    <property type="entry name" value="TRNASYNTHSER"/>
</dbReference>
<dbReference type="SUPFAM" id="SSF55681">
    <property type="entry name" value="Class II aaRS and biotin synthetases"/>
    <property type="match status" value="1"/>
</dbReference>
<dbReference type="SUPFAM" id="SSF46589">
    <property type="entry name" value="tRNA-binding arm"/>
    <property type="match status" value="1"/>
</dbReference>
<dbReference type="PROSITE" id="PS50862">
    <property type="entry name" value="AA_TRNA_LIGASE_II"/>
    <property type="match status" value="1"/>
</dbReference>